<geneLocation type="mitochondrion"/>
<sequence>MPQLVPFYFVNEITFTFVIITLMVYILSKYILPRFVRLFLSRTFISKLSDISKK</sequence>
<accession>Q08656</accession>
<accession>M1QL73</accession>
<gene>
    <name type="primary">atp-8</name>
    <name type="ORF">NCM022</name>
    <name type="ORF">NCU16024</name>
</gene>
<organism>
    <name type="scientific">Neurospora crassa (strain ATCC 24698 / 74-OR23-1A / CBS 708.71 / DSM 1257 / FGSC 987)</name>
    <dbReference type="NCBI Taxonomy" id="367110"/>
    <lineage>
        <taxon>Eukaryota</taxon>
        <taxon>Fungi</taxon>
        <taxon>Dikarya</taxon>
        <taxon>Ascomycota</taxon>
        <taxon>Pezizomycotina</taxon>
        <taxon>Sordariomycetes</taxon>
        <taxon>Sordariomycetidae</taxon>
        <taxon>Sordariales</taxon>
        <taxon>Sordariaceae</taxon>
        <taxon>Neurospora</taxon>
    </lineage>
</organism>
<dbReference type="EMBL" id="AH001270">
    <property type="protein sequence ID" value="AAA31965.2"/>
    <property type="molecule type" value="Genomic_DNA"/>
</dbReference>
<dbReference type="EMBL" id="L14642">
    <property type="protein sequence ID" value="AAA66052.1"/>
    <property type="molecule type" value="Genomic_DNA"/>
</dbReference>
<dbReference type="EMBL" id="KC683708">
    <property type="protein sequence ID" value="AGG16013.1"/>
    <property type="molecule type" value="Genomic_DNA"/>
</dbReference>
<dbReference type="PIR" id="S44065">
    <property type="entry name" value="S44065"/>
</dbReference>
<dbReference type="RefSeq" id="YP_009126725.1">
    <property type="nucleotide sequence ID" value="NC_026614.1"/>
</dbReference>
<dbReference type="SMR" id="Q08656"/>
<dbReference type="FunCoup" id="Q08656">
    <property type="interactions" value="85"/>
</dbReference>
<dbReference type="STRING" id="367110.Q08656"/>
<dbReference type="EnsemblFungi" id="AGG16013">
    <property type="protein sequence ID" value="AGG16013"/>
    <property type="gene ID" value="NCU16024"/>
</dbReference>
<dbReference type="GeneID" id="23681579"/>
<dbReference type="KEGG" id="ncr:NCU16024"/>
<dbReference type="VEuPathDB" id="FungiDB:NCU16024"/>
<dbReference type="InParanoid" id="Q08656"/>
<dbReference type="OrthoDB" id="3916939at2759"/>
<dbReference type="Proteomes" id="UP000001805">
    <property type="component" value="Mitochondrion"/>
</dbReference>
<dbReference type="GO" id="GO:0031966">
    <property type="term" value="C:mitochondrial membrane"/>
    <property type="evidence" value="ECO:0007669"/>
    <property type="project" value="UniProtKB-SubCell"/>
</dbReference>
<dbReference type="GO" id="GO:0045259">
    <property type="term" value="C:proton-transporting ATP synthase complex"/>
    <property type="evidence" value="ECO:0007669"/>
    <property type="project" value="UniProtKB-KW"/>
</dbReference>
<dbReference type="GO" id="GO:0015078">
    <property type="term" value="F:proton transmembrane transporter activity"/>
    <property type="evidence" value="ECO:0007669"/>
    <property type="project" value="InterPro"/>
</dbReference>
<dbReference type="GO" id="GO:0015986">
    <property type="term" value="P:proton motive force-driven ATP synthesis"/>
    <property type="evidence" value="ECO:0000318"/>
    <property type="project" value="GO_Central"/>
</dbReference>
<dbReference type="InterPro" id="IPR009230">
    <property type="entry name" value="ATP_synth_su8_fun"/>
</dbReference>
<dbReference type="PANTHER" id="PTHR36101">
    <property type="entry name" value="ATP SYNTHASE PROTEIN 8"/>
    <property type="match status" value="1"/>
</dbReference>
<dbReference type="PANTHER" id="PTHR36101:SF1">
    <property type="entry name" value="ATP SYNTHASE PROTEIN 8"/>
    <property type="match status" value="1"/>
</dbReference>
<dbReference type="Pfam" id="PF05933">
    <property type="entry name" value="Fun_ATP-synt_8"/>
    <property type="match status" value="1"/>
</dbReference>
<protein>
    <recommendedName>
        <fullName>ATP synthase protein 8</fullName>
    </recommendedName>
    <alternativeName>
        <fullName>A6L</fullName>
    </alternativeName>
    <alternativeName>
        <fullName>F-ATPase subunit 8</fullName>
    </alternativeName>
</protein>
<evidence type="ECO:0000250" key="1"/>
<evidence type="ECO:0000255" key="2"/>
<evidence type="ECO:0000305" key="3"/>
<proteinExistence type="inferred from homology"/>
<keyword id="KW-0066">ATP synthesis</keyword>
<keyword id="KW-0138">CF(0)</keyword>
<keyword id="KW-0375">Hydrogen ion transport</keyword>
<keyword id="KW-0406">Ion transport</keyword>
<keyword id="KW-0472">Membrane</keyword>
<keyword id="KW-0496">Mitochondrion</keyword>
<keyword id="KW-1185">Reference proteome</keyword>
<keyword id="KW-0812">Transmembrane</keyword>
<keyword id="KW-1133">Transmembrane helix</keyword>
<keyword id="KW-0813">Transport</keyword>
<name>ATP8_NEUCR</name>
<comment type="function">
    <text evidence="1">Mitochondrial membrane ATP synthase (F(1)F(0) ATP synthase or Complex V) produces ATP from ADP in the presence of a proton gradient across the membrane which is generated by electron transport complexes of the respiratory chain. F-type ATPases consist of two structural domains, F(1) - containing the extramembraneous catalytic core and F(0) - containing the membrane proton channel, linked together by a central stalk and a peripheral stalk. During catalysis, ATP synthesis in the catalytic domain of F(1) is coupled via a rotary mechanism of the central stalk subunits to proton translocation. Part of the complex F(0) domain. Minor subunit located with subunit a in the membrane (By similarity).</text>
</comment>
<comment type="subunit">
    <text evidence="1">F-type ATPases have 2 components, CF(1) - the catalytic core - and CF(0) - the membrane proton channel.</text>
</comment>
<comment type="subcellular location">
    <subcellularLocation>
        <location>Mitochondrion membrane</location>
        <topology>Single-pass membrane protein</topology>
    </subcellularLocation>
</comment>
<comment type="similarity">
    <text evidence="3">Belongs to the ATPase protein 8 family.</text>
</comment>
<reference key="1">
    <citation type="journal article" date="1984" name="J. Mol. Biol.">
        <title>Two intervening sequences in the ATPase subunit 6 gene of Neurospora crassa. A short intron (93 base-pairs) and a long intron that is stable after excision.</title>
        <authorList>
            <person name="Morelli G."/>
            <person name="Macino G."/>
        </authorList>
    </citation>
    <scope>NUCLEOTIDE SEQUENCE [GENOMIC DNA]</scope>
    <source>
        <strain>ATCC 24698 / 74-OR23-1A / CBS 708.71 / DSM 1257 / FGSC 987</strain>
    </source>
</reference>
<reference key="2">
    <citation type="journal article" date="1994" name="Curr. Genet.">
        <title>Revision of the nucleotide sequence and RNA splicing pathway of the Neurospora mitochondrial gene encoding ATPase subunit 6.</title>
        <authorList>
            <person name="Collins R.A."/>
            <person name="Olive J.E."/>
        </authorList>
    </citation>
    <scope>NUCLEOTIDE SEQUENCE [GENOMIC DNA]</scope>
    <source>
        <strain>ATCC 24698 / 74-OR23-1A / CBS 708.71 / DSM 1257 / FGSC 987</strain>
    </source>
</reference>
<reference key="3">
    <citation type="journal article" date="2003" name="Nature">
        <title>The genome sequence of the filamentous fungus Neurospora crassa.</title>
        <authorList>
            <person name="Galagan J.E."/>
            <person name="Calvo S.E."/>
            <person name="Borkovich K.A."/>
            <person name="Selker E.U."/>
            <person name="Read N.D."/>
            <person name="Jaffe D.B."/>
            <person name="FitzHugh W."/>
            <person name="Ma L.-J."/>
            <person name="Smirnov S."/>
            <person name="Purcell S."/>
            <person name="Rehman B."/>
            <person name="Elkins T."/>
            <person name="Engels R."/>
            <person name="Wang S."/>
            <person name="Nielsen C.B."/>
            <person name="Butler J."/>
            <person name="Endrizzi M."/>
            <person name="Qui D."/>
            <person name="Ianakiev P."/>
            <person name="Bell-Pedersen D."/>
            <person name="Nelson M.A."/>
            <person name="Werner-Washburne M."/>
            <person name="Selitrennikoff C.P."/>
            <person name="Kinsey J.A."/>
            <person name="Braun E.L."/>
            <person name="Zelter A."/>
            <person name="Schulte U."/>
            <person name="Kothe G.O."/>
            <person name="Jedd G."/>
            <person name="Mewes H.-W."/>
            <person name="Staben C."/>
            <person name="Marcotte E."/>
            <person name="Greenberg D."/>
            <person name="Roy A."/>
            <person name="Foley K."/>
            <person name="Naylor J."/>
            <person name="Stange-Thomann N."/>
            <person name="Barrett R."/>
            <person name="Gnerre S."/>
            <person name="Kamal M."/>
            <person name="Kamvysselis M."/>
            <person name="Mauceli E.W."/>
            <person name="Bielke C."/>
            <person name="Rudd S."/>
            <person name="Frishman D."/>
            <person name="Krystofova S."/>
            <person name="Rasmussen C."/>
            <person name="Metzenberg R.L."/>
            <person name="Perkins D.D."/>
            <person name="Kroken S."/>
            <person name="Cogoni C."/>
            <person name="Macino G."/>
            <person name="Catcheside D.E.A."/>
            <person name="Li W."/>
            <person name="Pratt R.J."/>
            <person name="Osmani S.A."/>
            <person name="DeSouza C.P.C."/>
            <person name="Glass N.L."/>
            <person name="Orbach M.J."/>
            <person name="Berglund J.A."/>
            <person name="Voelker R."/>
            <person name="Yarden O."/>
            <person name="Plamann M."/>
            <person name="Seiler S."/>
            <person name="Dunlap J.C."/>
            <person name="Radford A."/>
            <person name="Aramayo R."/>
            <person name="Natvig D.O."/>
            <person name="Alex L.A."/>
            <person name="Mannhaupt G."/>
            <person name="Ebbole D.J."/>
            <person name="Freitag M."/>
            <person name="Paulsen I."/>
            <person name="Sachs M.S."/>
            <person name="Lander E.S."/>
            <person name="Nusbaum C."/>
            <person name="Birren B.W."/>
        </authorList>
    </citation>
    <scope>NUCLEOTIDE SEQUENCE [LARGE SCALE GENOMIC DNA]</scope>
    <source>
        <strain>ATCC 24698 / 74-OR23-1A / CBS 708.71 / DSM 1257 / FGSC 987</strain>
    </source>
</reference>
<reference key="4">
    <citation type="book" date="2004" name="The Mycota II, Genetics and Biotechnology (2nd edition)">
        <title>Mitochondrial genetics of Neurospora.</title>
        <editorList>
            <person name="Kueck U."/>
        </editorList>
        <authorList>
            <person name="Kennell J.C."/>
            <person name="Collins R.A."/>
            <person name="Griffiths A.J.F."/>
            <person name="Nargang F.E."/>
        </authorList>
    </citation>
    <scope>GENOME REANNOTATION</scope>
    <source>
        <strain>ATCC 24698 / 74-OR23-1A / CBS 708.71 / DSM 1257 / FGSC 987</strain>
    </source>
</reference>
<feature type="chain" id="PRO_0000195602" description="ATP synthase protein 8">
    <location>
        <begin position="1"/>
        <end position="54"/>
    </location>
</feature>
<feature type="transmembrane region" description="Helical" evidence="2">
    <location>
        <begin position="13"/>
        <end position="32"/>
    </location>
</feature>